<name>MIAA_BACC3</name>
<dbReference type="EC" id="2.5.1.75" evidence="1"/>
<dbReference type="EMBL" id="CP001407">
    <property type="protein sequence ID" value="ACO29508.1"/>
    <property type="molecule type" value="Genomic_DNA"/>
</dbReference>
<dbReference type="RefSeq" id="WP_000504940.1">
    <property type="nucleotide sequence ID" value="NZ_CP009318.1"/>
</dbReference>
<dbReference type="SMR" id="C1ENE7"/>
<dbReference type="GeneID" id="45023542"/>
<dbReference type="KEGG" id="bcx:BCA_3804"/>
<dbReference type="PATRIC" id="fig|572264.18.peg.3761"/>
<dbReference type="Proteomes" id="UP000002210">
    <property type="component" value="Chromosome"/>
</dbReference>
<dbReference type="GO" id="GO:0005524">
    <property type="term" value="F:ATP binding"/>
    <property type="evidence" value="ECO:0007669"/>
    <property type="project" value="UniProtKB-UniRule"/>
</dbReference>
<dbReference type="GO" id="GO:0052381">
    <property type="term" value="F:tRNA dimethylallyltransferase activity"/>
    <property type="evidence" value="ECO:0007669"/>
    <property type="project" value="UniProtKB-UniRule"/>
</dbReference>
<dbReference type="GO" id="GO:0006400">
    <property type="term" value="P:tRNA modification"/>
    <property type="evidence" value="ECO:0007669"/>
    <property type="project" value="TreeGrafter"/>
</dbReference>
<dbReference type="FunFam" id="1.10.20.140:FF:000001">
    <property type="entry name" value="tRNA dimethylallyltransferase"/>
    <property type="match status" value="1"/>
</dbReference>
<dbReference type="Gene3D" id="1.10.20.140">
    <property type="match status" value="1"/>
</dbReference>
<dbReference type="Gene3D" id="3.40.50.300">
    <property type="entry name" value="P-loop containing nucleotide triphosphate hydrolases"/>
    <property type="match status" value="1"/>
</dbReference>
<dbReference type="HAMAP" id="MF_00185">
    <property type="entry name" value="IPP_trans"/>
    <property type="match status" value="1"/>
</dbReference>
<dbReference type="InterPro" id="IPR039657">
    <property type="entry name" value="Dimethylallyltransferase"/>
</dbReference>
<dbReference type="InterPro" id="IPR018022">
    <property type="entry name" value="IPT"/>
</dbReference>
<dbReference type="InterPro" id="IPR027417">
    <property type="entry name" value="P-loop_NTPase"/>
</dbReference>
<dbReference type="NCBIfam" id="TIGR00174">
    <property type="entry name" value="miaA"/>
    <property type="match status" value="1"/>
</dbReference>
<dbReference type="PANTHER" id="PTHR11088">
    <property type="entry name" value="TRNA DIMETHYLALLYLTRANSFERASE"/>
    <property type="match status" value="1"/>
</dbReference>
<dbReference type="PANTHER" id="PTHR11088:SF60">
    <property type="entry name" value="TRNA DIMETHYLALLYLTRANSFERASE"/>
    <property type="match status" value="1"/>
</dbReference>
<dbReference type="Pfam" id="PF01715">
    <property type="entry name" value="IPPT"/>
    <property type="match status" value="1"/>
</dbReference>
<dbReference type="SUPFAM" id="SSF52540">
    <property type="entry name" value="P-loop containing nucleoside triphosphate hydrolases"/>
    <property type="match status" value="2"/>
</dbReference>
<organism>
    <name type="scientific">Bacillus cereus (strain 03BB102)</name>
    <dbReference type="NCBI Taxonomy" id="572264"/>
    <lineage>
        <taxon>Bacteria</taxon>
        <taxon>Bacillati</taxon>
        <taxon>Bacillota</taxon>
        <taxon>Bacilli</taxon>
        <taxon>Bacillales</taxon>
        <taxon>Bacillaceae</taxon>
        <taxon>Bacillus</taxon>
        <taxon>Bacillus cereus group</taxon>
    </lineage>
</organism>
<comment type="function">
    <text evidence="1">Catalyzes the transfer of a dimethylallyl group onto the adenine at position 37 in tRNAs that read codons beginning with uridine, leading to the formation of N6-(dimethylallyl)adenosine (i(6)A).</text>
</comment>
<comment type="catalytic activity">
    <reaction evidence="1">
        <text>adenosine(37) in tRNA + dimethylallyl diphosphate = N(6)-dimethylallyladenosine(37) in tRNA + diphosphate</text>
        <dbReference type="Rhea" id="RHEA:26482"/>
        <dbReference type="Rhea" id="RHEA-COMP:10162"/>
        <dbReference type="Rhea" id="RHEA-COMP:10375"/>
        <dbReference type="ChEBI" id="CHEBI:33019"/>
        <dbReference type="ChEBI" id="CHEBI:57623"/>
        <dbReference type="ChEBI" id="CHEBI:74411"/>
        <dbReference type="ChEBI" id="CHEBI:74415"/>
        <dbReference type="EC" id="2.5.1.75"/>
    </reaction>
</comment>
<comment type="cofactor">
    <cofactor evidence="1">
        <name>Mg(2+)</name>
        <dbReference type="ChEBI" id="CHEBI:18420"/>
    </cofactor>
</comment>
<comment type="subunit">
    <text evidence="1">Monomer.</text>
</comment>
<comment type="similarity">
    <text evidence="1">Belongs to the IPP transferase family.</text>
</comment>
<sequence>MGEVQREKVAVIIGPTAVGKTKLSIDLAKALNGEIISGDSMQIYRTMDIGTAKVTKEEMDGIPHYMVDIKNPEESFSVAEFQERVRKHIREITERGKLPIIVGGTGLYIQSVLFDYQFTDDAGDAIYREQMEKLALERGVEYVHKKLQEVDPESAERIHANNVRRVIRALEIFHTSGEKMSDQLEKQENELLYDVSLIGLTMDREMLYDRINLRVDIMMDQGLLEEVEGLYNRGIRDCQSIQAIGYKEIYDYFEDRVSLEEAVSQLKTNSRRYAKRQLTWFRNKMDVTWFDVTDGEKTSEILRYIEGKLQLKSNNSK</sequence>
<gene>
    <name evidence="1" type="primary">miaA</name>
    <name type="ordered locus">BCA_3804</name>
</gene>
<proteinExistence type="inferred from homology"/>
<keyword id="KW-0067">ATP-binding</keyword>
<keyword id="KW-0460">Magnesium</keyword>
<keyword id="KW-0547">Nucleotide-binding</keyword>
<keyword id="KW-0808">Transferase</keyword>
<keyword id="KW-0819">tRNA processing</keyword>
<reference key="1">
    <citation type="submission" date="2009-02" db="EMBL/GenBank/DDBJ databases">
        <title>Genome sequence of Bacillus cereus 03BB102.</title>
        <authorList>
            <person name="Dodson R.J."/>
            <person name="Jackson P."/>
            <person name="Munk A.C."/>
            <person name="Brettin T."/>
            <person name="Bruce D."/>
            <person name="Detter C."/>
            <person name="Tapia R."/>
            <person name="Han C."/>
            <person name="Sutton G."/>
            <person name="Sims D."/>
        </authorList>
    </citation>
    <scope>NUCLEOTIDE SEQUENCE [LARGE SCALE GENOMIC DNA]</scope>
    <source>
        <strain>03BB102</strain>
    </source>
</reference>
<accession>C1ENE7</accession>
<protein>
    <recommendedName>
        <fullName evidence="1">tRNA dimethylallyltransferase</fullName>
        <ecNumber evidence="1">2.5.1.75</ecNumber>
    </recommendedName>
    <alternativeName>
        <fullName evidence="1">Dimethylallyl diphosphate:tRNA dimethylallyltransferase</fullName>
        <shortName evidence="1">DMAPP:tRNA dimethylallyltransferase</shortName>
        <shortName evidence="1">DMATase</shortName>
    </alternativeName>
    <alternativeName>
        <fullName evidence="1">Isopentenyl-diphosphate:tRNA isopentenyltransferase</fullName>
        <shortName evidence="1">IPP transferase</shortName>
        <shortName evidence="1">IPPT</shortName>
        <shortName evidence="1">IPTase</shortName>
    </alternativeName>
</protein>
<feature type="chain" id="PRO_1000124163" description="tRNA dimethylallyltransferase">
    <location>
        <begin position="1"/>
        <end position="317"/>
    </location>
</feature>
<feature type="region of interest" description="Interaction with substrate tRNA" evidence="1">
    <location>
        <begin position="39"/>
        <end position="42"/>
    </location>
</feature>
<feature type="binding site" evidence="1">
    <location>
        <begin position="14"/>
        <end position="21"/>
    </location>
    <ligand>
        <name>ATP</name>
        <dbReference type="ChEBI" id="CHEBI:30616"/>
    </ligand>
</feature>
<feature type="binding site" evidence="1">
    <location>
        <begin position="16"/>
        <end position="21"/>
    </location>
    <ligand>
        <name>substrate</name>
    </ligand>
</feature>
<feature type="site" description="Interaction with substrate tRNA" evidence="1">
    <location>
        <position position="105"/>
    </location>
</feature>
<evidence type="ECO:0000255" key="1">
    <source>
        <dbReference type="HAMAP-Rule" id="MF_00185"/>
    </source>
</evidence>